<sequence length="115" mass="13669">MSKINDINDLVNATFQVKKFFRDTKKKFNLNYEEIYILNHILRSESNEISSKEIAKCSEFKPYYLTKALQKLKDLKLLSKKRSLQDERTVIVYVTDTQKANIQKLISELEEYIKN</sequence>
<name>SARR_STAAM</name>
<organism>
    <name type="scientific">Staphylococcus aureus (strain Mu50 / ATCC 700699)</name>
    <dbReference type="NCBI Taxonomy" id="158878"/>
    <lineage>
        <taxon>Bacteria</taxon>
        <taxon>Bacillati</taxon>
        <taxon>Bacillota</taxon>
        <taxon>Bacilli</taxon>
        <taxon>Bacillales</taxon>
        <taxon>Staphylococcaceae</taxon>
        <taxon>Staphylococcus</taxon>
    </lineage>
</organism>
<feature type="initiator methionine" description="Removed" evidence="1">
    <location>
        <position position="1"/>
    </location>
</feature>
<feature type="chain" id="PRO_0000219585" description="HTH-type transcriptional regulator SarR">
    <location>
        <begin position="2"/>
        <end position="115"/>
    </location>
</feature>
<feature type="DNA-binding region" description="H-T-H motif" evidence="2">
    <location>
        <begin position="51"/>
        <end position="74"/>
    </location>
</feature>
<dbReference type="EMBL" id="BA000017">
    <property type="protein sequence ID" value="BAB58457.1"/>
    <property type="molecule type" value="Genomic_DNA"/>
</dbReference>
<dbReference type="RefSeq" id="WP_000036076.1">
    <property type="nucleotide sequence ID" value="NC_002758.2"/>
</dbReference>
<dbReference type="SMR" id="Q7A2M3"/>
<dbReference type="KEGG" id="sav:SAV2295"/>
<dbReference type="HOGENOM" id="CLU_164084_0_0_9"/>
<dbReference type="Proteomes" id="UP000002481">
    <property type="component" value="Chromosome"/>
</dbReference>
<dbReference type="GO" id="GO:0005737">
    <property type="term" value="C:cytoplasm"/>
    <property type="evidence" value="ECO:0007669"/>
    <property type="project" value="UniProtKB-SubCell"/>
</dbReference>
<dbReference type="GO" id="GO:0003677">
    <property type="term" value="F:DNA binding"/>
    <property type="evidence" value="ECO:0007669"/>
    <property type="project" value="UniProtKB-KW"/>
</dbReference>
<dbReference type="GO" id="GO:0003700">
    <property type="term" value="F:DNA-binding transcription factor activity"/>
    <property type="evidence" value="ECO:0007669"/>
    <property type="project" value="InterPro"/>
</dbReference>
<dbReference type="GO" id="GO:0006950">
    <property type="term" value="P:response to stress"/>
    <property type="evidence" value="ECO:0007669"/>
    <property type="project" value="TreeGrafter"/>
</dbReference>
<dbReference type="FunFam" id="1.10.10.10:FF:000578">
    <property type="entry name" value="HTH-type transcriptional regulator SarR"/>
    <property type="match status" value="1"/>
</dbReference>
<dbReference type="Gene3D" id="1.10.10.10">
    <property type="entry name" value="Winged helix-like DNA-binding domain superfamily/Winged helix DNA-binding domain"/>
    <property type="match status" value="1"/>
</dbReference>
<dbReference type="InterPro" id="IPR039422">
    <property type="entry name" value="MarR/SlyA-like"/>
</dbReference>
<dbReference type="InterPro" id="IPR010166">
    <property type="entry name" value="SarA/Rot_dom"/>
</dbReference>
<dbReference type="InterPro" id="IPR055166">
    <property type="entry name" value="Transc_reg_Sar_Rot_HTH"/>
</dbReference>
<dbReference type="InterPro" id="IPR036388">
    <property type="entry name" value="WH-like_DNA-bd_sf"/>
</dbReference>
<dbReference type="InterPro" id="IPR036390">
    <property type="entry name" value="WH_DNA-bd_sf"/>
</dbReference>
<dbReference type="NCBIfam" id="TIGR01889">
    <property type="entry name" value="Staph_reg_Sar"/>
    <property type="match status" value="1"/>
</dbReference>
<dbReference type="PANTHER" id="PTHR33164:SF56">
    <property type="entry name" value="HTH-TYPE TRANSCRIPTIONAL REGULATOR MHQR"/>
    <property type="match status" value="1"/>
</dbReference>
<dbReference type="PANTHER" id="PTHR33164">
    <property type="entry name" value="TRANSCRIPTIONAL REGULATOR, MARR FAMILY"/>
    <property type="match status" value="1"/>
</dbReference>
<dbReference type="Pfam" id="PF22381">
    <property type="entry name" value="Staph_reg_Sar_Rot"/>
    <property type="match status" value="1"/>
</dbReference>
<dbReference type="SUPFAM" id="SSF46785">
    <property type="entry name" value="Winged helix' DNA-binding domain"/>
    <property type="match status" value="1"/>
</dbReference>
<evidence type="ECO:0000250" key="1"/>
<evidence type="ECO:0000255" key="2"/>
<evidence type="ECO:0000305" key="3"/>
<reference key="1">
    <citation type="journal article" date="2001" name="Lancet">
        <title>Whole genome sequencing of meticillin-resistant Staphylococcus aureus.</title>
        <authorList>
            <person name="Kuroda M."/>
            <person name="Ohta T."/>
            <person name="Uchiyama I."/>
            <person name="Baba T."/>
            <person name="Yuzawa H."/>
            <person name="Kobayashi I."/>
            <person name="Cui L."/>
            <person name="Oguchi A."/>
            <person name="Aoki K."/>
            <person name="Nagai Y."/>
            <person name="Lian J.-Q."/>
            <person name="Ito T."/>
            <person name="Kanamori M."/>
            <person name="Matsumaru H."/>
            <person name="Maruyama A."/>
            <person name="Murakami H."/>
            <person name="Hosoyama A."/>
            <person name="Mizutani-Ui Y."/>
            <person name="Takahashi N.K."/>
            <person name="Sawano T."/>
            <person name="Inoue R."/>
            <person name="Kaito C."/>
            <person name="Sekimizu K."/>
            <person name="Hirakawa H."/>
            <person name="Kuhara S."/>
            <person name="Goto S."/>
            <person name="Yabuzaki J."/>
            <person name="Kanehisa M."/>
            <person name="Yamashita A."/>
            <person name="Oshima K."/>
            <person name="Furuya K."/>
            <person name="Yoshino C."/>
            <person name="Shiba T."/>
            <person name="Hattori M."/>
            <person name="Ogasawara N."/>
            <person name="Hayashi H."/>
            <person name="Hiramatsu K."/>
        </authorList>
    </citation>
    <scope>NUCLEOTIDE SEQUENCE [LARGE SCALE GENOMIC DNA]</scope>
    <source>
        <strain>Mu50 / ATCC 700699</strain>
    </source>
</reference>
<gene>
    <name type="primary">sarR</name>
    <name type="ordered locus">SAV2295</name>
</gene>
<protein>
    <recommendedName>
        <fullName>HTH-type transcriptional regulator SarR</fullName>
    </recommendedName>
    <alternativeName>
        <fullName>Staphylococcal accessory regulator R</fullName>
    </alternativeName>
</protein>
<comment type="function">
    <text evidence="1">Negative regulator of sarA transcription at late exponential and stationary growth phases. It contributes to the modulation of target genes downstream of the sarA regulatory cascade. Also, positively regulates expression of primary transcripts RNAII and RNAIII generated by agr (virulence accessory gene regulator) locus (By similarity).</text>
</comment>
<comment type="subunit">
    <text evidence="1">Homodimer.</text>
</comment>
<comment type="subcellular location">
    <subcellularLocation>
        <location evidence="1">Cytoplasm</location>
    </subcellularLocation>
</comment>
<comment type="similarity">
    <text evidence="3">Belongs to the SarA family.</text>
</comment>
<proteinExistence type="inferred from homology"/>
<accession>Q7A2M3</accession>
<keyword id="KW-0010">Activator</keyword>
<keyword id="KW-0963">Cytoplasm</keyword>
<keyword id="KW-0238">DNA-binding</keyword>
<keyword id="KW-0678">Repressor</keyword>
<keyword id="KW-0804">Transcription</keyword>
<keyword id="KW-0805">Transcription regulation</keyword>
<keyword id="KW-0843">Virulence</keyword>